<protein>
    <recommendedName>
        <fullName evidence="1">Large ribosomal subunit protein uL18</fullName>
    </recommendedName>
    <alternativeName>
        <fullName evidence="2">50S ribosomal protein L18</fullName>
    </alternativeName>
</protein>
<feature type="chain" id="PRO_1000214666" description="Large ribosomal subunit protein uL18">
    <location>
        <begin position="1"/>
        <end position="131"/>
    </location>
</feature>
<gene>
    <name evidence="1" type="primary">rplR</name>
    <name type="ordered locus">ckrop_1794</name>
</gene>
<sequence length="131" mass="14574">MSNDNKRLPIGKDIATRRRVARKARHFRIRKNLRGTAEIPRLVVHRTSRHMHVQVIDDTIGHTLAAASSIEPEVRAMEGDKKARGAKVGELIAERAKAKGIETVKFDRGGYKYHGRVAALADAAREGGLKF</sequence>
<comment type="function">
    <text evidence="1">This is one of the proteins that bind and probably mediate the attachment of the 5S RNA into the large ribosomal subunit, where it forms part of the central protuberance.</text>
</comment>
<comment type="subunit">
    <text evidence="1">Part of the 50S ribosomal subunit; part of the 5S rRNA/L5/L18/L25 subcomplex. Contacts the 5S and 23S rRNAs.</text>
</comment>
<comment type="similarity">
    <text evidence="1">Belongs to the universal ribosomal protein uL18 family.</text>
</comment>
<evidence type="ECO:0000255" key="1">
    <source>
        <dbReference type="HAMAP-Rule" id="MF_01337"/>
    </source>
</evidence>
<evidence type="ECO:0000305" key="2"/>
<keyword id="KW-1185">Reference proteome</keyword>
<keyword id="KW-0687">Ribonucleoprotein</keyword>
<keyword id="KW-0689">Ribosomal protein</keyword>
<keyword id="KW-0694">RNA-binding</keyword>
<keyword id="KW-0699">rRNA-binding</keyword>
<name>RL18_CORK4</name>
<organism>
    <name type="scientific">Corynebacterium kroppenstedtii (strain DSM 44385 / JCM 11950 / CIP 105744 / CCUG 35717)</name>
    <dbReference type="NCBI Taxonomy" id="645127"/>
    <lineage>
        <taxon>Bacteria</taxon>
        <taxon>Bacillati</taxon>
        <taxon>Actinomycetota</taxon>
        <taxon>Actinomycetes</taxon>
        <taxon>Mycobacteriales</taxon>
        <taxon>Corynebacteriaceae</taxon>
        <taxon>Corynebacterium</taxon>
    </lineage>
</organism>
<dbReference type="EMBL" id="CP001620">
    <property type="protein sequence ID" value="ACR18515.1"/>
    <property type="molecule type" value="Genomic_DNA"/>
</dbReference>
<dbReference type="RefSeq" id="WP_012732402.1">
    <property type="nucleotide sequence ID" value="NC_012704.1"/>
</dbReference>
<dbReference type="SMR" id="C4LL10"/>
<dbReference type="STRING" id="645127.ckrop_1794"/>
<dbReference type="KEGG" id="ckp:ckrop_1794"/>
<dbReference type="eggNOG" id="COG0256">
    <property type="taxonomic scope" value="Bacteria"/>
</dbReference>
<dbReference type="HOGENOM" id="CLU_098841_0_1_11"/>
<dbReference type="OrthoDB" id="9810939at2"/>
<dbReference type="Proteomes" id="UP000001473">
    <property type="component" value="Chromosome"/>
</dbReference>
<dbReference type="GO" id="GO:0022625">
    <property type="term" value="C:cytosolic large ribosomal subunit"/>
    <property type="evidence" value="ECO:0007669"/>
    <property type="project" value="TreeGrafter"/>
</dbReference>
<dbReference type="GO" id="GO:0008097">
    <property type="term" value="F:5S rRNA binding"/>
    <property type="evidence" value="ECO:0007669"/>
    <property type="project" value="TreeGrafter"/>
</dbReference>
<dbReference type="GO" id="GO:0003735">
    <property type="term" value="F:structural constituent of ribosome"/>
    <property type="evidence" value="ECO:0007669"/>
    <property type="project" value="InterPro"/>
</dbReference>
<dbReference type="GO" id="GO:0006412">
    <property type="term" value="P:translation"/>
    <property type="evidence" value="ECO:0007669"/>
    <property type="project" value="UniProtKB-UniRule"/>
</dbReference>
<dbReference type="CDD" id="cd00432">
    <property type="entry name" value="Ribosomal_L18_L5e"/>
    <property type="match status" value="1"/>
</dbReference>
<dbReference type="FunFam" id="3.30.420.100:FF:000001">
    <property type="entry name" value="50S ribosomal protein L18"/>
    <property type="match status" value="1"/>
</dbReference>
<dbReference type="Gene3D" id="3.30.420.100">
    <property type="match status" value="1"/>
</dbReference>
<dbReference type="HAMAP" id="MF_01337_B">
    <property type="entry name" value="Ribosomal_uL18_B"/>
    <property type="match status" value="1"/>
</dbReference>
<dbReference type="InterPro" id="IPR004389">
    <property type="entry name" value="Ribosomal_uL18_bac-type"/>
</dbReference>
<dbReference type="InterPro" id="IPR005484">
    <property type="entry name" value="Ribosomal_uL18_bac/euk"/>
</dbReference>
<dbReference type="NCBIfam" id="TIGR00060">
    <property type="entry name" value="L18_bact"/>
    <property type="match status" value="1"/>
</dbReference>
<dbReference type="PANTHER" id="PTHR12899">
    <property type="entry name" value="39S RIBOSOMAL PROTEIN L18, MITOCHONDRIAL"/>
    <property type="match status" value="1"/>
</dbReference>
<dbReference type="PANTHER" id="PTHR12899:SF3">
    <property type="entry name" value="LARGE RIBOSOMAL SUBUNIT PROTEIN UL18M"/>
    <property type="match status" value="1"/>
</dbReference>
<dbReference type="Pfam" id="PF00861">
    <property type="entry name" value="Ribosomal_L18p"/>
    <property type="match status" value="1"/>
</dbReference>
<dbReference type="SUPFAM" id="SSF53137">
    <property type="entry name" value="Translational machinery components"/>
    <property type="match status" value="1"/>
</dbReference>
<proteinExistence type="inferred from homology"/>
<accession>C4LL10</accession>
<reference key="1">
    <citation type="journal article" date="2008" name="J. Biotechnol.">
        <title>Ultrafast pyrosequencing of Corynebacterium kroppenstedtii DSM44385 revealed insights into the physiology of a lipophilic corynebacterium that lacks mycolic acids.</title>
        <authorList>
            <person name="Tauch A."/>
            <person name="Schneider J."/>
            <person name="Szczepanowski R."/>
            <person name="Tilker A."/>
            <person name="Viehoever P."/>
            <person name="Gartemann K.-H."/>
            <person name="Arnold W."/>
            <person name="Blom J."/>
            <person name="Brinkrolf K."/>
            <person name="Brune I."/>
            <person name="Goetker S."/>
            <person name="Weisshaar B."/>
            <person name="Goesmann A."/>
            <person name="Droege M."/>
            <person name="Puehler A."/>
        </authorList>
    </citation>
    <scope>NUCLEOTIDE SEQUENCE [LARGE SCALE GENOMIC DNA]</scope>
    <source>
        <strain>DSM 44385 / JCM 11950 / CIP 105744 / CCUG 35717</strain>
    </source>
</reference>